<name>DCUP_PSEAB</name>
<organism>
    <name type="scientific">Pseudomonas aeruginosa (strain UCBPP-PA14)</name>
    <dbReference type="NCBI Taxonomy" id="208963"/>
    <lineage>
        <taxon>Bacteria</taxon>
        <taxon>Pseudomonadati</taxon>
        <taxon>Pseudomonadota</taxon>
        <taxon>Gammaproteobacteria</taxon>
        <taxon>Pseudomonadales</taxon>
        <taxon>Pseudomonadaceae</taxon>
        <taxon>Pseudomonas</taxon>
    </lineage>
</organism>
<comment type="function">
    <text evidence="1">Catalyzes the decarboxylation of four acetate groups of uroporphyrinogen-III to yield coproporphyrinogen-III.</text>
</comment>
<comment type="catalytic activity">
    <reaction evidence="1">
        <text>uroporphyrinogen III + 4 H(+) = coproporphyrinogen III + 4 CO2</text>
        <dbReference type="Rhea" id="RHEA:19865"/>
        <dbReference type="ChEBI" id="CHEBI:15378"/>
        <dbReference type="ChEBI" id="CHEBI:16526"/>
        <dbReference type="ChEBI" id="CHEBI:57308"/>
        <dbReference type="ChEBI" id="CHEBI:57309"/>
        <dbReference type="EC" id="4.1.1.37"/>
    </reaction>
</comment>
<comment type="pathway">
    <text evidence="1">Porphyrin-containing compound metabolism; protoporphyrin-IX biosynthesis; coproporphyrinogen-III from 5-aminolevulinate: step 4/4.</text>
</comment>
<comment type="subunit">
    <text evidence="1">Homodimer.</text>
</comment>
<comment type="subcellular location">
    <subcellularLocation>
        <location evidence="1">Cytoplasm</location>
    </subcellularLocation>
</comment>
<comment type="similarity">
    <text evidence="1">Belongs to the uroporphyrinogen decarboxylase family.</text>
</comment>
<accession>Q02EY3</accession>
<evidence type="ECO:0000255" key="1">
    <source>
        <dbReference type="HAMAP-Rule" id="MF_00218"/>
    </source>
</evidence>
<protein>
    <recommendedName>
        <fullName evidence="1">Uroporphyrinogen decarboxylase</fullName>
        <shortName evidence="1">UPD</shortName>
        <shortName evidence="1">URO-D</shortName>
        <ecNumber evidence="1">4.1.1.37</ecNumber>
    </recommendedName>
</protein>
<gene>
    <name evidence="1" type="primary">hemE</name>
    <name type="ordered locus">PA14_66550</name>
</gene>
<feature type="chain" id="PRO_1000023946" description="Uroporphyrinogen decarboxylase">
    <location>
        <begin position="1"/>
        <end position="355"/>
    </location>
</feature>
<feature type="binding site" evidence="1">
    <location>
        <begin position="27"/>
        <end position="31"/>
    </location>
    <ligand>
        <name>substrate</name>
    </ligand>
</feature>
<feature type="binding site" evidence="1">
    <location>
        <position position="78"/>
    </location>
    <ligand>
        <name>substrate</name>
    </ligand>
</feature>
<feature type="binding site" evidence="1">
    <location>
        <position position="155"/>
    </location>
    <ligand>
        <name>substrate</name>
    </ligand>
</feature>
<feature type="binding site" evidence="1">
    <location>
        <position position="210"/>
    </location>
    <ligand>
        <name>substrate</name>
    </ligand>
</feature>
<feature type="binding site" evidence="1">
    <location>
        <position position="328"/>
    </location>
    <ligand>
        <name>substrate</name>
    </ligand>
</feature>
<feature type="site" description="Transition state stabilizer" evidence="1">
    <location>
        <position position="78"/>
    </location>
</feature>
<keyword id="KW-0963">Cytoplasm</keyword>
<keyword id="KW-0210">Decarboxylase</keyword>
<keyword id="KW-0456">Lyase</keyword>
<keyword id="KW-0627">Porphyrin biosynthesis</keyword>
<dbReference type="EC" id="4.1.1.37" evidence="1"/>
<dbReference type="EMBL" id="CP000438">
    <property type="protein sequence ID" value="ABJ14418.1"/>
    <property type="molecule type" value="Genomic_DNA"/>
</dbReference>
<dbReference type="RefSeq" id="WP_003141773.1">
    <property type="nucleotide sequence ID" value="NZ_CP034244.1"/>
</dbReference>
<dbReference type="SMR" id="Q02EY3"/>
<dbReference type="KEGG" id="pau:PA14_66550"/>
<dbReference type="PseudoCAP" id="PA14_66550"/>
<dbReference type="HOGENOM" id="CLU_040933_0_0_6"/>
<dbReference type="BioCyc" id="PAER208963:G1G74-5614-MONOMER"/>
<dbReference type="UniPathway" id="UPA00251">
    <property type="reaction ID" value="UER00321"/>
</dbReference>
<dbReference type="Proteomes" id="UP000000653">
    <property type="component" value="Chromosome"/>
</dbReference>
<dbReference type="GO" id="GO:0005829">
    <property type="term" value="C:cytosol"/>
    <property type="evidence" value="ECO:0007669"/>
    <property type="project" value="TreeGrafter"/>
</dbReference>
<dbReference type="GO" id="GO:0004853">
    <property type="term" value="F:uroporphyrinogen decarboxylase activity"/>
    <property type="evidence" value="ECO:0007669"/>
    <property type="project" value="UniProtKB-UniRule"/>
</dbReference>
<dbReference type="GO" id="GO:0019353">
    <property type="term" value="P:protoporphyrinogen IX biosynthetic process from glutamate"/>
    <property type="evidence" value="ECO:0007669"/>
    <property type="project" value="TreeGrafter"/>
</dbReference>
<dbReference type="CDD" id="cd00717">
    <property type="entry name" value="URO-D"/>
    <property type="match status" value="1"/>
</dbReference>
<dbReference type="FunFam" id="3.20.20.210:FF:000001">
    <property type="entry name" value="Uroporphyrinogen decarboxylase"/>
    <property type="match status" value="1"/>
</dbReference>
<dbReference type="Gene3D" id="3.20.20.210">
    <property type="match status" value="1"/>
</dbReference>
<dbReference type="HAMAP" id="MF_00218">
    <property type="entry name" value="URO_D"/>
    <property type="match status" value="1"/>
</dbReference>
<dbReference type="InterPro" id="IPR038071">
    <property type="entry name" value="UROD/MetE-like_sf"/>
</dbReference>
<dbReference type="InterPro" id="IPR006361">
    <property type="entry name" value="Uroporphyrinogen_deCO2ase_HemE"/>
</dbReference>
<dbReference type="InterPro" id="IPR000257">
    <property type="entry name" value="Uroporphyrinogen_deCOase"/>
</dbReference>
<dbReference type="NCBIfam" id="TIGR01464">
    <property type="entry name" value="hemE"/>
    <property type="match status" value="1"/>
</dbReference>
<dbReference type="PANTHER" id="PTHR21091">
    <property type="entry name" value="METHYLTETRAHYDROFOLATE:HOMOCYSTEINE METHYLTRANSFERASE RELATED"/>
    <property type="match status" value="1"/>
</dbReference>
<dbReference type="PANTHER" id="PTHR21091:SF169">
    <property type="entry name" value="UROPORPHYRINOGEN DECARBOXYLASE"/>
    <property type="match status" value="1"/>
</dbReference>
<dbReference type="Pfam" id="PF01208">
    <property type="entry name" value="URO-D"/>
    <property type="match status" value="1"/>
</dbReference>
<dbReference type="SUPFAM" id="SSF51726">
    <property type="entry name" value="UROD/MetE-like"/>
    <property type="match status" value="1"/>
</dbReference>
<dbReference type="PROSITE" id="PS00906">
    <property type="entry name" value="UROD_1"/>
    <property type="match status" value="1"/>
</dbReference>
<dbReference type="PROSITE" id="PS00907">
    <property type="entry name" value="UROD_2"/>
    <property type="match status" value="1"/>
</dbReference>
<reference key="1">
    <citation type="journal article" date="2006" name="Genome Biol.">
        <title>Genomic analysis reveals that Pseudomonas aeruginosa virulence is combinatorial.</title>
        <authorList>
            <person name="Lee D.G."/>
            <person name="Urbach J.M."/>
            <person name="Wu G."/>
            <person name="Liberati N.T."/>
            <person name="Feinbaum R.L."/>
            <person name="Miyata S."/>
            <person name="Diggins L.T."/>
            <person name="He J."/>
            <person name="Saucier M."/>
            <person name="Deziel E."/>
            <person name="Friedman L."/>
            <person name="Li L."/>
            <person name="Grills G."/>
            <person name="Montgomery K."/>
            <person name="Kucherlapati R."/>
            <person name="Rahme L.G."/>
            <person name="Ausubel F.M."/>
        </authorList>
    </citation>
    <scope>NUCLEOTIDE SEQUENCE [LARGE SCALE GENOMIC DNA]</scope>
    <source>
        <strain>UCBPP-PA14</strain>
    </source>
</reference>
<proteinExistence type="inferred from homology"/>
<sequence>MTALKNDRFLRALLKQPVDVTPVWMMRQAGRYLPEYRATRAKAGDFMSLCMNPELACEVTLQPLDRYPQLDAAILFSDILTIPDAMGQGLYFETGEGPRFRKVVSSLADIEALPVPDPEQDLGYVMDAVRTIRRELNGRVPLIGFSGSPWTLATYMVEGGSSKDFRKSKAMLYDNPKAMHALLDKLAQSVTSYLNGQIRAGAQAVQIFDSWGGSLSAAAYQEFSLVYMRKIVDGLIREHDGRRVPVILFTKGGGLWLESMAEVGAEALGLDWTCDIGSARARVGERVALQGNMDPSVLYANPAAIRAEVARILAAYGKGTGHVFNLGHGITPEVDPAHAGAFFEAVHELSAQYHG</sequence>